<accession>Q5LMJ4</accession>
<proteinExistence type="inferred from homology"/>
<dbReference type="EMBL" id="CP000031">
    <property type="protein sequence ID" value="AAV96794.1"/>
    <property type="molecule type" value="Genomic_DNA"/>
</dbReference>
<dbReference type="RefSeq" id="WP_011049249.1">
    <property type="nucleotide sequence ID" value="NC_003911.12"/>
</dbReference>
<dbReference type="SMR" id="Q5LMJ4"/>
<dbReference type="STRING" id="246200.SPO3569"/>
<dbReference type="PaxDb" id="246200-SPO3569"/>
<dbReference type="KEGG" id="sil:SPO3569"/>
<dbReference type="eggNOG" id="COG0353">
    <property type="taxonomic scope" value="Bacteria"/>
</dbReference>
<dbReference type="HOGENOM" id="CLU_060739_1_1_5"/>
<dbReference type="OrthoDB" id="9802672at2"/>
<dbReference type="Proteomes" id="UP000001023">
    <property type="component" value="Chromosome"/>
</dbReference>
<dbReference type="GO" id="GO:0003677">
    <property type="term" value="F:DNA binding"/>
    <property type="evidence" value="ECO:0007669"/>
    <property type="project" value="UniProtKB-UniRule"/>
</dbReference>
<dbReference type="GO" id="GO:0008270">
    <property type="term" value="F:zinc ion binding"/>
    <property type="evidence" value="ECO:0007669"/>
    <property type="project" value="UniProtKB-KW"/>
</dbReference>
<dbReference type="GO" id="GO:0006310">
    <property type="term" value="P:DNA recombination"/>
    <property type="evidence" value="ECO:0007669"/>
    <property type="project" value="UniProtKB-UniRule"/>
</dbReference>
<dbReference type="GO" id="GO:0006281">
    <property type="term" value="P:DNA repair"/>
    <property type="evidence" value="ECO:0007669"/>
    <property type="project" value="UniProtKB-UniRule"/>
</dbReference>
<dbReference type="CDD" id="cd01025">
    <property type="entry name" value="TOPRIM_recR"/>
    <property type="match status" value="1"/>
</dbReference>
<dbReference type="Gene3D" id="3.40.1360.10">
    <property type="match status" value="1"/>
</dbReference>
<dbReference type="Gene3D" id="6.10.250.240">
    <property type="match status" value="1"/>
</dbReference>
<dbReference type="Gene3D" id="1.10.8.420">
    <property type="entry name" value="RecR Domain 1"/>
    <property type="match status" value="1"/>
</dbReference>
<dbReference type="HAMAP" id="MF_00017">
    <property type="entry name" value="RecR"/>
    <property type="match status" value="1"/>
</dbReference>
<dbReference type="InterPro" id="IPR000093">
    <property type="entry name" value="DNA_Rcmb_RecR"/>
</dbReference>
<dbReference type="InterPro" id="IPR023627">
    <property type="entry name" value="Rcmb_RecR"/>
</dbReference>
<dbReference type="InterPro" id="IPR015967">
    <property type="entry name" value="Rcmb_RecR_Znf"/>
</dbReference>
<dbReference type="InterPro" id="IPR006171">
    <property type="entry name" value="TOPRIM_dom"/>
</dbReference>
<dbReference type="InterPro" id="IPR034137">
    <property type="entry name" value="TOPRIM_RecR"/>
</dbReference>
<dbReference type="NCBIfam" id="TIGR00615">
    <property type="entry name" value="recR"/>
    <property type="match status" value="1"/>
</dbReference>
<dbReference type="PANTHER" id="PTHR30446">
    <property type="entry name" value="RECOMBINATION PROTEIN RECR"/>
    <property type="match status" value="1"/>
</dbReference>
<dbReference type="PANTHER" id="PTHR30446:SF0">
    <property type="entry name" value="RECOMBINATION PROTEIN RECR"/>
    <property type="match status" value="1"/>
</dbReference>
<dbReference type="Pfam" id="PF21175">
    <property type="entry name" value="RecR_C"/>
    <property type="match status" value="1"/>
</dbReference>
<dbReference type="Pfam" id="PF21176">
    <property type="entry name" value="RecR_HhH"/>
    <property type="match status" value="1"/>
</dbReference>
<dbReference type="Pfam" id="PF02132">
    <property type="entry name" value="RecR_ZnF"/>
    <property type="match status" value="1"/>
</dbReference>
<dbReference type="Pfam" id="PF13662">
    <property type="entry name" value="Toprim_4"/>
    <property type="match status" value="1"/>
</dbReference>
<dbReference type="SMART" id="SM00493">
    <property type="entry name" value="TOPRIM"/>
    <property type="match status" value="1"/>
</dbReference>
<dbReference type="SUPFAM" id="SSF111304">
    <property type="entry name" value="Recombination protein RecR"/>
    <property type="match status" value="1"/>
</dbReference>
<dbReference type="PROSITE" id="PS50880">
    <property type="entry name" value="TOPRIM"/>
    <property type="match status" value="1"/>
</dbReference>
<protein>
    <recommendedName>
        <fullName evidence="1">Recombination protein RecR</fullName>
    </recommendedName>
</protein>
<name>RECR_RUEPO</name>
<comment type="function">
    <text evidence="1">May play a role in DNA repair. It seems to be involved in an RecBC-independent recombinational process of DNA repair. It may act with RecF and RecO.</text>
</comment>
<comment type="similarity">
    <text evidence="1">Belongs to the RecR family.</text>
</comment>
<sequence length="198" mass="21078">MAGSTKDIDALIELMARLPGLGPRSARRAVLHLIRKRALLLTPLADLMGQVAATARECLNCGNVGTSDICDICTDERRATGELCVVEDVADLWAMERSGVFKGRYHVLGGTLSALDGVGPDELRIPRLADRVTAEAISEVILALNATIDGQTTAHYIADQLGGRVRLTSLAQGVPIGGELDYLDDGTISAAMRARKEL</sequence>
<gene>
    <name evidence="1" type="primary">recR</name>
    <name type="ordered locus">SPO3569</name>
</gene>
<evidence type="ECO:0000255" key="1">
    <source>
        <dbReference type="HAMAP-Rule" id="MF_00017"/>
    </source>
</evidence>
<feature type="chain" id="PRO_0000190384" description="Recombination protein RecR">
    <location>
        <begin position="1"/>
        <end position="198"/>
    </location>
</feature>
<feature type="domain" description="Toprim" evidence="1">
    <location>
        <begin position="81"/>
        <end position="175"/>
    </location>
</feature>
<feature type="zinc finger region" description="C4-type" evidence="1">
    <location>
        <begin position="58"/>
        <end position="73"/>
    </location>
</feature>
<keyword id="KW-0227">DNA damage</keyword>
<keyword id="KW-0233">DNA recombination</keyword>
<keyword id="KW-0234">DNA repair</keyword>
<keyword id="KW-0479">Metal-binding</keyword>
<keyword id="KW-1185">Reference proteome</keyword>
<keyword id="KW-0862">Zinc</keyword>
<keyword id="KW-0863">Zinc-finger</keyword>
<reference key="1">
    <citation type="journal article" date="2004" name="Nature">
        <title>Genome sequence of Silicibacter pomeroyi reveals adaptations to the marine environment.</title>
        <authorList>
            <person name="Moran M.A."/>
            <person name="Buchan A."/>
            <person name="Gonzalez J.M."/>
            <person name="Heidelberg J.F."/>
            <person name="Whitman W.B."/>
            <person name="Kiene R.P."/>
            <person name="Henriksen J.R."/>
            <person name="King G.M."/>
            <person name="Belas R."/>
            <person name="Fuqua C."/>
            <person name="Brinkac L.M."/>
            <person name="Lewis M."/>
            <person name="Johri S."/>
            <person name="Weaver B."/>
            <person name="Pai G."/>
            <person name="Eisen J.A."/>
            <person name="Rahe E."/>
            <person name="Sheldon W.M."/>
            <person name="Ye W."/>
            <person name="Miller T.R."/>
            <person name="Carlton J."/>
            <person name="Rasko D.A."/>
            <person name="Paulsen I.T."/>
            <person name="Ren Q."/>
            <person name="Daugherty S.C."/>
            <person name="DeBoy R.T."/>
            <person name="Dodson R.J."/>
            <person name="Durkin A.S."/>
            <person name="Madupu R."/>
            <person name="Nelson W.C."/>
            <person name="Sullivan S.A."/>
            <person name="Rosovitz M.J."/>
            <person name="Haft D.H."/>
            <person name="Selengut J."/>
            <person name="Ward N."/>
        </authorList>
    </citation>
    <scope>NUCLEOTIDE SEQUENCE [LARGE SCALE GENOMIC DNA]</scope>
    <source>
        <strain>ATCC 700808 / DSM 15171 / DSS-3</strain>
    </source>
</reference>
<reference key="2">
    <citation type="journal article" date="2014" name="Stand. Genomic Sci.">
        <title>An updated genome annotation for the model marine bacterium Ruegeria pomeroyi DSS-3.</title>
        <authorList>
            <person name="Rivers A.R."/>
            <person name="Smith C.B."/>
            <person name="Moran M.A."/>
        </authorList>
    </citation>
    <scope>GENOME REANNOTATION</scope>
    <source>
        <strain>ATCC 700808 / DSM 15171 / DSS-3</strain>
    </source>
</reference>
<organism>
    <name type="scientific">Ruegeria pomeroyi (strain ATCC 700808 / DSM 15171 / DSS-3)</name>
    <name type="common">Silicibacter pomeroyi</name>
    <dbReference type="NCBI Taxonomy" id="246200"/>
    <lineage>
        <taxon>Bacteria</taxon>
        <taxon>Pseudomonadati</taxon>
        <taxon>Pseudomonadota</taxon>
        <taxon>Alphaproteobacteria</taxon>
        <taxon>Rhodobacterales</taxon>
        <taxon>Roseobacteraceae</taxon>
        <taxon>Ruegeria</taxon>
    </lineage>
</organism>